<gene>
    <name type="ORF">ORF2a</name>
</gene>
<name>RDRP_CMVFN</name>
<keyword id="KW-0547">Nucleotide-binding</keyword>
<keyword id="KW-0548">Nucleotidyltransferase</keyword>
<keyword id="KW-1185">Reference proteome</keyword>
<keyword id="KW-0696">RNA-directed RNA polymerase</keyword>
<keyword id="KW-0808">Transferase</keyword>
<keyword id="KW-0693">Viral RNA replication</keyword>
<accession>P16490</accession>
<dbReference type="EC" id="2.7.7.48"/>
<dbReference type="EMBL" id="D00355">
    <property type="protein sequence ID" value="BAA00263.1"/>
    <property type="molecule type" value="Genomic_RNA"/>
</dbReference>
<dbReference type="PIR" id="JQ0015">
    <property type="entry name" value="WMVXCU"/>
</dbReference>
<dbReference type="RefSeq" id="NP_049324.1">
    <property type="nucleotide sequence ID" value="NC_002035.1"/>
</dbReference>
<dbReference type="KEGG" id="vg:962642"/>
<dbReference type="Proteomes" id="UP000002502">
    <property type="component" value="Genome"/>
</dbReference>
<dbReference type="GO" id="GO:0000166">
    <property type="term" value="F:nucleotide binding"/>
    <property type="evidence" value="ECO:0007669"/>
    <property type="project" value="UniProtKB-KW"/>
</dbReference>
<dbReference type="GO" id="GO:0003723">
    <property type="term" value="F:RNA binding"/>
    <property type="evidence" value="ECO:0007669"/>
    <property type="project" value="InterPro"/>
</dbReference>
<dbReference type="GO" id="GO:0003968">
    <property type="term" value="F:RNA-directed RNA polymerase activity"/>
    <property type="evidence" value="ECO:0007669"/>
    <property type="project" value="UniProtKB-KW"/>
</dbReference>
<dbReference type="GO" id="GO:0006351">
    <property type="term" value="P:DNA-templated transcription"/>
    <property type="evidence" value="ECO:0007669"/>
    <property type="project" value="InterPro"/>
</dbReference>
<dbReference type="GO" id="GO:0039690">
    <property type="term" value="P:positive stranded viral RNA replication"/>
    <property type="evidence" value="ECO:0007669"/>
    <property type="project" value="InterPro"/>
</dbReference>
<dbReference type="CDD" id="cd23252">
    <property type="entry name" value="Bromoviridae_RdRp"/>
    <property type="match status" value="1"/>
</dbReference>
<dbReference type="InterPro" id="IPR047309">
    <property type="entry name" value="Bromoviridae_RdRp"/>
</dbReference>
<dbReference type="InterPro" id="IPR043502">
    <property type="entry name" value="DNA/RNA_pol_sf"/>
</dbReference>
<dbReference type="InterPro" id="IPR001788">
    <property type="entry name" value="RNA-dep_RNA_pol_alsuvir"/>
</dbReference>
<dbReference type="InterPro" id="IPR007094">
    <property type="entry name" value="RNA-dir_pol_PSvirus"/>
</dbReference>
<dbReference type="Pfam" id="PF00978">
    <property type="entry name" value="RdRP_2"/>
    <property type="match status" value="1"/>
</dbReference>
<dbReference type="SUPFAM" id="SSF56672">
    <property type="entry name" value="DNA/RNA polymerases"/>
    <property type="match status" value="1"/>
</dbReference>
<dbReference type="PROSITE" id="PS50507">
    <property type="entry name" value="RDRP_SSRNA_POS"/>
    <property type="match status" value="1"/>
</dbReference>
<protein>
    <recommendedName>
        <fullName>RNA-directed RNA polymerase 2a</fullName>
        <shortName>protein 2a</shortName>
        <ecNumber>2.7.7.48</ecNumber>
    </recommendedName>
</protein>
<feature type="chain" id="PRO_0000083273" description="RNA-directed RNA polymerase 2a">
    <location>
        <begin position="1"/>
        <end position="857"/>
    </location>
</feature>
<feature type="domain" description="RdRp catalytic" evidence="2">
    <location>
        <begin position="511"/>
        <end position="624"/>
    </location>
</feature>
<feature type="region of interest" description="Disordered" evidence="3">
    <location>
        <begin position="780"/>
        <end position="827"/>
    </location>
</feature>
<feature type="compositionally biased region" description="Basic and acidic residues" evidence="3">
    <location>
        <begin position="780"/>
        <end position="789"/>
    </location>
</feature>
<feature type="compositionally biased region" description="Polar residues" evidence="3">
    <location>
        <begin position="804"/>
        <end position="816"/>
    </location>
</feature>
<reference key="1">
    <citation type="journal article" date="1988" name="J. Gen. Virol.">
        <title>Nucleotide sequence and evolutionary relationships of cucumber mosaic virus (CMV) strains: CMV RNA 2.</title>
        <authorList>
            <person name="Rizzo T.M."/>
            <person name="Palukaitis P."/>
        </authorList>
    </citation>
    <scope>NUCLEOTIDE SEQUENCE [GENOMIC RNA]</scope>
</reference>
<organism>
    <name type="scientific">Cucumber mosaic virus (strain FNY)</name>
    <name type="common">CMV</name>
    <dbReference type="NCBI Taxonomy" id="12307"/>
    <lineage>
        <taxon>Viruses</taxon>
        <taxon>Riboviria</taxon>
        <taxon>Orthornavirae</taxon>
        <taxon>Kitrinoviricota</taxon>
        <taxon>Alsuviricetes</taxon>
        <taxon>Martellivirales</taxon>
        <taxon>Bromoviridae</taxon>
        <taxon>Cucumovirus</taxon>
        <taxon>Cucumber mosaic virus</taxon>
    </lineage>
</organism>
<organismHost>
    <name type="scientific">Cucurbita pepo</name>
    <name type="common">Vegetable marrow</name>
    <name type="synonym">Summer squash</name>
    <dbReference type="NCBI Taxonomy" id="3663"/>
</organismHost>
<organismHost>
    <name type="scientific">Nicotiana tabacum</name>
    <name type="common">Common tobacco</name>
    <dbReference type="NCBI Taxonomy" id="4097"/>
</organismHost>
<comment type="function">
    <text evidence="4">RNA-dependent RNA polymerase which replicates the viral genome composed of 3 RNA segments, RNA1, RNA2 and RNA3.</text>
</comment>
<comment type="catalytic activity">
    <reaction evidence="2">
        <text>RNA(n) + a ribonucleoside 5'-triphosphate = RNA(n+1) + diphosphate</text>
        <dbReference type="Rhea" id="RHEA:21248"/>
        <dbReference type="Rhea" id="RHEA-COMP:14527"/>
        <dbReference type="Rhea" id="RHEA-COMP:17342"/>
        <dbReference type="ChEBI" id="CHEBI:33019"/>
        <dbReference type="ChEBI" id="CHEBI:61557"/>
        <dbReference type="ChEBI" id="CHEBI:140395"/>
        <dbReference type="EC" id="2.7.7.48"/>
    </reaction>
</comment>
<comment type="subunit">
    <text evidence="1">Interacts with replication protein 1a.</text>
</comment>
<comment type="similarity">
    <text evidence="4">Belongs to the ssRNA positive-strand viruses RNA-directed RNA polymerase family.</text>
</comment>
<proteinExistence type="inferred from homology"/>
<sequence>MAFPAPAFSLANLLNGSYGVDTPEDVERLRSEQREEAAAACRNYRPLPAVDVSESVTEDAHSLRTPDGAPAEAVSDEFVTYGAEDYLEKSDDELLVAFETMVKPMRIGQLWCPAFNKCSFISSIAMARALLLAPRTSHRTMKCFEDLVAAIYTKSDFYYSEECEADDAQIDISSRDVPGYSFEPWSRTSGFEPPPICEACDMIMYQCPCFDFNALKKSCAERTFADDYVIEGLDGVVDNATLLSNLGPFLVPVKCQYEKCPTPTIAIPPDLNRATDRVDINLVQSICDSTLPTHSNYDDSFHQVFVESADYSIDLDHVRLRQSDLIAKIPDSGHMIPVLNTGSGHKRVGTTKEVLTAIKKRNADVPELGDSVNLSRLSKAVAERFFISYINGNSLASSNFVNVVSNFHDYMEKWKSSGLSYDDLPDLHAENLQFYDHMIKSDVKPVVSDTLNIDRPVPATITYHKKSITSQFSPLFTALFERFQRCLRERIILPVGKISSLEMAGFDVKNKHCLEIDLSKFDKSQGEFHLLIQEHILNGLGCPAPITKWWCDFHRFSYIRDRRAGVGMPISFQRRTGDALTYFGNTIVTMAEFAWCYDTDQFEKLLFSGDDSLGFSLLPPVGDPSKFTTLFNMEAKVMEPAVPYICSKFLLSDEFGNTFSVPDPLREVQRLGTKKIPYSDNDEFLFAHFMSFVDRLKFLDRMSQSCIDQLSIFFELKYKKSGEEAALMLGAFKKYTANFQSYKELYYSDRRQCELINSFCSTEFRVERVNSNKQRKNYGIERRCNDKRRTPTGSYGGGEEAETKVSQTESTGTRSQKSQRESAFKSQTIPLPTVLSSGWFGTDRVMPPCERGGVTRV</sequence>
<evidence type="ECO:0000250" key="1"/>
<evidence type="ECO:0000255" key="2">
    <source>
        <dbReference type="PROSITE-ProRule" id="PRU00539"/>
    </source>
</evidence>
<evidence type="ECO:0000256" key="3">
    <source>
        <dbReference type="SAM" id="MobiDB-lite"/>
    </source>
</evidence>
<evidence type="ECO:0000305" key="4"/>